<evidence type="ECO:0000250" key="1"/>
<evidence type="ECO:0000269" key="2">
    <source>
    </source>
</evidence>
<evidence type="ECO:0000305" key="3"/>
<name>AROG_SCHPO</name>
<comment type="function">
    <text evidence="1">Stereospecific condensation of phosphoenolpyruvate (PEP) and D-erythrose-4-phosphate (E4P) giving rise to 3-deoxy-D-arabino-heptulosonate-7-phosphate (DAHP).</text>
</comment>
<comment type="catalytic activity">
    <reaction>
        <text>D-erythrose 4-phosphate + phosphoenolpyruvate + H2O = 7-phospho-2-dehydro-3-deoxy-D-arabino-heptonate + phosphate</text>
        <dbReference type="Rhea" id="RHEA:14717"/>
        <dbReference type="ChEBI" id="CHEBI:15377"/>
        <dbReference type="ChEBI" id="CHEBI:16897"/>
        <dbReference type="ChEBI" id="CHEBI:43474"/>
        <dbReference type="ChEBI" id="CHEBI:58394"/>
        <dbReference type="ChEBI" id="CHEBI:58702"/>
        <dbReference type="EC" id="2.5.1.54"/>
    </reaction>
</comment>
<comment type="pathway">
    <text>Metabolic intermediate biosynthesis; chorismate biosynthesis; chorismate from D-erythrose 4-phosphate and phosphoenolpyruvate: step 1/7.</text>
</comment>
<comment type="subcellular location">
    <subcellularLocation>
        <location evidence="2">Cytoplasm</location>
    </subcellularLocation>
    <subcellularLocation>
        <location evidence="2">Nucleus</location>
    </subcellularLocation>
</comment>
<comment type="similarity">
    <text evidence="3">Belongs to the class-I DAHP synthase family.</text>
</comment>
<sequence>MSPVFLPSGETYDQEHLDDNRVLGYNPLVPAALVQQEIPVSETSRKVITDSRKEIQAILNKQDDRIIVVVGPCSIHDPKLAMDYAKLLKPKADELQDALCVVMRCYLEKPRTTIGWKGLVNDPNLDGSFAINKGIRMARQMYCDVTNFGIPLASEMLDNISPQFFADLLSFGAIGARTTESQLHRELASALSFPVGFKNGTDGTVGVAIDAIGATAHPHTMLGVTKQGLAAITMTRGNKDTFIILRGGKKGPNYDAEHVAAVRKDLEKANLPPRIMIDCSHGNSSKNHLNQPKVSKSIAEQIRNGDSSIVGVMIESHINEGRQDAPIRPGVKDTLKYGVSITDACVSWEQTAPMLDDLAEAVRARRQNQKSN</sequence>
<protein>
    <recommendedName>
        <fullName>Phospho-2-dehydro-3-deoxyheptonate aldolase, tyrosine-inhibited</fullName>
        <ecNumber>2.5.1.54</ecNumber>
    </recommendedName>
    <alternativeName>
        <fullName>3-deoxy-D-arabino-heptulosonate 7-phosphate synthase</fullName>
    </alternativeName>
    <alternativeName>
        <fullName>DAHP synthase</fullName>
    </alternativeName>
    <alternativeName>
        <fullName>Phospho-2-keto-3-deoxyheptonate aldolase</fullName>
    </alternativeName>
</protein>
<reference key="1">
    <citation type="journal article" date="2002" name="Nature">
        <title>The genome sequence of Schizosaccharomyces pombe.</title>
        <authorList>
            <person name="Wood V."/>
            <person name="Gwilliam R."/>
            <person name="Rajandream M.A."/>
            <person name="Lyne M.H."/>
            <person name="Lyne R."/>
            <person name="Stewart A."/>
            <person name="Sgouros J.G."/>
            <person name="Peat N."/>
            <person name="Hayles J."/>
            <person name="Baker S.G."/>
            <person name="Basham D."/>
            <person name="Bowman S."/>
            <person name="Brooks K."/>
            <person name="Brown D."/>
            <person name="Brown S."/>
            <person name="Chillingworth T."/>
            <person name="Churcher C.M."/>
            <person name="Collins M."/>
            <person name="Connor R."/>
            <person name="Cronin A."/>
            <person name="Davis P."/>
            <person name="Feltwell T."/>
            <person name="Fraser A."/>
            <person name="Gentles S."/>
            <person name="Goble A."/>
            <person name="Hamlin N."/>
            <person name="Harris D.E."/>
            <person name="Hidalgo J."/>
            <person name="Hodgson G."/>
            <person name="Holroyd S."/>
            <person name="Hornsby T."/>
            <person name="Howarth S."/>
            <person name="Huckle E.J."/>
            <person name="Hunt S."/>
            <person name="Jagels K."/>
            <person name="James K.D."/>
            <person name="Jones L."/>
            <person name="Jones M."/>
            <person name="Leather S."/>
            <person name="McDonald S."/>
            <person name="McLean J."/>
            <person name="Mooney P."/>
            <person name="Moule S."/>
            <person name="Mungall K.L."/>
            <person name="Murphy L.D."/>
            <person name="Niblett D."/>
            <person name="Odell C."/>
            <person name="Oliver K."/>
            <person name="O'Neil S."/>
            <person name="Pearson D."/>
            <person name="Quail M.A."/>
            <person name="Rabbinowitsch E."/>
            <person name="Rutherford K.M."/>
            <person name="Rutter S."/>
            <person name="Saunders D."/>
            <person name="Seeger K."/>
            <person name="Sharp S."/>
            <person name="Skelton J."/>
            <person name="Simmonds M.N."/>
            <person name="Squares R."/>
            <person name="Squares S."/>
            <person name="Stevens K."/>
            <person name="Taylor K."/>
            <person name="Taylor R.G."/>
            <person name="Tivey A."/>
            <person name="Walsh S.V."/>
            <person name="Warren T."/>
            <person name="Whitehead S."/>
            <person name="Woodward J.R."/>
            <person name="Volckaert G."/>
            <person name="Aert R."/>
            <person name="Robben J."/>
            <person name="Grymonprez B."/>
            <person name="Weltjens I."/>
            <person name="Vanstreels E."/>
            <person name="Rieger M."/>
            <person name="Schaefer M."/>
            <person name="Mueller-Auer S."/>
            <person name="Gabel C."/>
            <person name="Fuchs M."/>
            <person name="Duesterhoeft A."/>
            <person name="Fritzc C."/>
            <person name="Holzer E."/>
            <person name="Moestl D."/>
            <person name="Hilbert H."/>
            <person name="Borzym K."/>
            <person name="Langer I."/>
            <person name="Beck A."/>
            <person name="Lehrach H."/>
            <person name="Reinhardt R."/>
            <person name="Pohl T.M."/>
            <person name="Eger P."/>
            <person name="Zimmermann W."/>
            <person name="Wedler H."/>
            <person name="Wambutt R."/>
            <person name="Purnelle B."/>
            <person name="Goffeau A."/>
            <person name="Cadieu E."/>
            <person name="Dreano S."/>
            <person name="Gloux S."/>
            <person name="Lelaure V."/>
            <person name="Mottier S."/>
            <person name="Galibert F."/>
            <person name="Aves S.J."/>
            <person name="Xiang Z."/>
            <person name="Hunt C."/>
            <person name="Moore K."/>
            <person name="Hurst S.M."/>
            <person name="Lucas M."/>
            <person name="Rochet M."/>
            <person name="Gaillardin C."/>
            <person name="Tallada V.A."/>
            <person name="Garzon A."/>
            <person name="Thode G."/>
            <person name="Daga R.R."/>
            <person name="Cruzado L."/>
            <person name="Jimenez J."/>
            <person name="Sanchez M."/>
            <person name="del Rey F."/>
            <person name="Benito J."/>
            <person name="Dominguez A."/>
            <person name="Revuelta J.L."/>
            <person name="Moreno S."/>
            <person name="Armstrong J."/>
            <person name="Forsburg S.L."/>
            <person name="Cerutti L."/>
            <person name="Lowe T."/>
            <person name="McCombie W.R."/>
            <person name="Paulsen I."/>
            <person name="Potashkin J."/>
            <person name="Shpakovski G.V."/>
            <person name="Ussery D."/>
            <person name="Barrell B.G."/>
            <person name="Nurse P."/>
        </authorList>
    </citation>
    <scope>NUCLEOTIDE SEQUENCE [LARGE SCALE GENOMIC DNA]</scope>
    <source>
        <strain>972 / ATCC 24843</strain>
    </source>
</reference>
<reference key="2">
    <citation type="journal article" date="2006" name="Nat. Biotechnol.">
        <title>ORFeome cloning and global analysis of protein localization in the fission yeast Schizosaccharomyces pombe.</title>
        <authorList>
            <person name="Matsuyama A."/>
            <person name="Arai R."/>
            <person name="Yashiroda Y."/>
            <person name="Shirai A."/>
            <person name="Kamata A."/>
            <person name="Sekido S."/>
            <person name="Kobayashi Y."/>
            <person name="Hashimoto A."/>
            <person name="Hamamoto M."/>
            <person name="Hiraoka Y."/>
            <person name="Horinouchi S."/>
            <person name="Yoshida M."/>
        </authorList>
    </citation>
    <scope>SUBCELLULAR LOCATION [LARGE SCALE ANALYSIS]</scope>
</reference>
<accession>Q9UT09</accession>
<organism>
    <name type="scientific">Schizosaccharomyces pombe (strain 972 / ATCC 24843)</name>
    <name type="common">Fission yeast</name>
    <dbReference type="NCBI Taxonomy" id="284812"/>
    <lineage>
        <taxon>Eukaryota</taxon>
        <taxon>Fungi</taxon>
        <taxon>Dikarya</taxon>
        <taxon>Ascomycota</taxon>
        <taxon>Taphrinomycotina</taxon>
        <taxon>Schizosaccharomycetes</taxon>
        <taxon>Schizosaccharomycetales</taxon>
        <taxon>Schizosaccharomycetaceae</taxon>
        <taxon>Schizosaccharomyces</taxon>
    </lineage>
</organism>
<gene>
    <name type="primary">aro4</name>
    <name type="ORF">SPAP8A3.07c</name>
</gene>
<proteinExistence type="inferred from homology"/>
<keyword id="KW-0028">Amino-acid biosynthesis</keyword>
<keyword id="KW-0057">Aromatic amino acid biosynthesis</keyword>
<keyword id="KW-0963">Cytoplasm</keyword>
<keyword id="KW-0539">Nucleus</keyword>
<keyword id="KW-1185">Reference proteome</keyword>
<keyword id="KW-0346">Stress response</keyword>
<keyword id="KW-0808">Transferase</keyword>
<feature type="chain" id="PRO_0000314763" description="Phospho-2-dehydro-3-deoxyheptonate aldolase, tyrosine-inhibited">
    <location>
        <begin position="1"/>
        <end position="372"/>
    </location>
</feature>
<dbReference type="EC" id="2.5.1.54"/>
<dbReference type="EMBL" id="CU329670">
    <property type="protein sequence ID" value="CAB55174.1"/>
    <property type="molecule type" value="Genomic_DNA"/>
</dbReference>
<dbReference type="PIR" id="T39244">
    <property type="entry name" value="T39244"/>
</dbReference>
<dbReference type="RefSeq" id="NP_594946.1">
    <property type="nucleotide sequence ID" value="NM_001020377.2"/>
</dbReference>
<dbReference type="SMR" id="Q9UT09"/>
<dbReference type="BioGRID" id="279051">
    <property type="interactions" value="104"/>
</dbReference>
<dbReference type="FunCoup" id="Q9UT09">
    <property type="interactions" value="481"/>
</dbReference>
<dbReference type="STRING" id="284812.Q9UT09"/>
<dbReference type="iPTMnet" id="Q9UT09"/>
<dbReference type="PaxDb" id="4896-SPAP8A3.07c.1"/>
<dbReference type="EnsemblFungi" id="SPAP8A3.07c.1">
    <property type="protein sequence ID" value="SPAP8A3.07c.1:pep"/>
    <property type="gene ID" value="SPAP8A3.07c"/>
</dbReference>
<dbReference type="KEGG" id="spo:2542597"/>
<dbReference type="PomBase" id="SPAP8A3.07c"/>
<dbReference type="VEuPathDB" id="FungiDB:SPAP8A3.07c"/>
<dbReference type="eggNOG" id="ENOG502QPSU">
    <property type="taxonomic scope" value="Eukaryota"/>
</dbReference>
<dbReference type="HOGENOM" id="CLU_030903_0_1_1"/>
<dbReference type="InParanoid" id="Q9UT09"/>
<dbReference type="OMA" id="LVMRAYV"/>
<dbReference type="PhylomeDB" id="Q9UT09"/>
<dbReference type="UniPathway" id="UPA00053">
    <property type="reaction ID" value="UER00084"/>
</dbReference>
<dbReference type="PRO" id="PR:Q9UT09"/>
<dbReference type="Proteomes" id="UP000002485">
    <property type="component" value="Chromosome I"/>
</dbReference>
<dbReference type="GO" id="GO:0005737">
    <property type="term" value="C:cytoplasm"/>
    <property type="evidence" value="ECO:0000318"/>
    <property type="project" value="GO_Central"/>
</dbReference>
<dbReference type="GO" id="GO:0005829">
    <property type="term" value="C:cytosol"/>
    <property type="evidence" value="ECO:0007005"/>
    <property type="project" value="PomBase"/>
</dbReference>
<dbReference type="GO" id="GO:0005739">
    <property type="term" value="C:mitochondrion"/>
    <property type="evidence" value="ECO:0000250"/>
    <property type="project" value="PomBase"/>
</dbReference>
<dbReference type="GO" id="GO:0005634">
    <property type="term" value="C:nucleus"/>
    <property type="evidence" value="ECO:0007005"/>
    <property type="project" value="PomBase"/>
</dbReference>
<dbReference type="GO" id="GO:0003849">
    <property type="term" value="F:3-deoxy-7-phosphoheptulonate synthase activity"/>
    <property type="evidence" value="ECO:0000318"/>
    <property type="project" value="GO_Central"/>
</dbReference>
<dbReference type="GO" id="GO:0008652">
    <property type="term" value="P:amino acid biosynthetic process"/>
    <property type="evidence" value="ECO:0007669"/>
    <property type="project" value="UniProtKB-KW"/>
</dbReference>
<dbReference type="GO" id="GO:0009073">
    <property type="term" value="P:aromatic amino acid family biosynthetic process"/>
    <property type="evidence" value="ECO:0000318"/>
    <property type="project" value="GO_Central"/>
</dbReference>
<dbReference type="GO" id="GO:0009423">
    <property type="term" value="P:chorismate biosynthetic process"/>
    <property type="evidence" value="ECO:0007669"/>
    <property type="project" value="UniProtKB-UniPathway"/>
</dbReference>
<dbReference type="FunFam" id="3.20.20.70:FF:000005">
    <property type="entry name" value="Phospho-2-dehydro-3-deoxyheptonate aldolase"/>
    <property type="match status" value="1"/>
</dbReference>
<dbReference type="Gene3D" id="3.20.20.70">
    <property type="entry name" value="Aldolase class I"/>
    <property type="match status" value="1"/>
</dbReference>
<dbReference type="InterPro" id="IPR013785">
    <property type="entry name" value="Aldolase_TIM"/>
</dbReference>
<dbReference type="InterPro" id="IPR006218">
    <property type="entry name" value="DAHP1/KDSA"/>
</dbReference>
<dbReference type="InterPro" id="IPR006219">
    <property type="entry name" value="DAHP_synth_1"/>
</dbReference>
<dbReference type="NCBIfam" id="TIGR00034">
    <property type="entry name" value="aroFGH"/>
    <property type="match status" value="1"/>
</dbReference>
<dbReference type="NCBIfam" id="NF009395">
    <property type="entry name" value="PRK12755.1"/>
    <property type="match status" value="1"/>
</dbReference>
<dbReference type="PANTHER" id="PTHR21225">
    <property type="entry name" value="PHOSPHO-2-DEHYDRO-3-DEOXYHEPTONATE ALDOLASE DAHP SYNTHETASE"/>
    <property type="match status" value="1"/>
</dbReference>
<dbReference type="PANTHER" id="PTHR21225:SF19">
    <property type="entry name" value="PHOSPHO-2-DEHYDRO-3-DEOXYHEPTONATE ALDOLASE, TYROSINE-INHIBITED"/>
    <property type="match status" value="1"/>
</dbReference>
<dbReference type="Pfam" id="PF00793">
    <property type="entry name" value="DAHP_synth_1"/>
    <property type="match status" value="1"/>
</dbReference>
<dbReference type="PIRSF" id="PIRSF001361">
    <property type="entry name" value="DAHP_synthase"/>
    <property type="match status" value="1"/>
</dbReference>
<dbReference type="SUPFAM" id="SSF51569">
    <property type="entry name" value="Aldolase"/>
    <property type="match status" value="1"/>
</dbReference>